<accession>P0A7X7</accession>
<accession>P21504</accession>
<accession>Q8X9D2</accession>
<keyword id="KW-0143">Chaperone</keyword>
<keyword id="KW-0963">Cytoplasm</keyword>
<keyword id="KW-1185">Reference proteome</keyword>
<keyword id="KW-0690">Ribosome biogenesis</keyword>
<keyword id="KW-0698">rRNA processing</keyword>
<organism>
    <name type="scientific">Escherichia coli O6:H1 (strain CFT073 / ATCC 700928 / UPEC)</name>
    <dbReference type="NCBI Taxonomy" id="199310"/>
    <lineage>
        <taxon>Bacteria</taxon>
        <taxon>Pseudomonadati</taxon>
        <taxon>Pseudomonadota</taxon>
        <taxon>Gammaproteobacteria</taxon>
        <taxon>Enterobacterales</taxon>
        <taxon>Enterobacteriaceae</taxon>
        <taxon>Escherichia</taxon>
    </lineage>
</organism>
<gene>
    <name evidence="1" type="primary">rimM</name>
    <name type="ordered locus">c3129</name>
</gene>
<protein>
    <recommendedName>
        <fullName evidence="1">Ribosome maturation factor RimM</fullName>
    </recommendedName>
</protein>
<feature type="chain" id="PRO_0000163288" description="Ribosome maturation factor RimM">
    <location>
        <begin position="1"/>
        <end position="182"/>
    </location>
</feature>
<feature type="domain" description="PRC barrel" evidence="1">
    <location>
        <begin position="103"/>
        <end position="182"/>
    </location>
</feature>
<name>RIMM_ECOL6</name>
<proteinExistence type="inferred from homology"/>
<comment type="function">
    <text evidence="1">An accessory protein needed during the final step in the assembly of 30S ribosomal subunit, possibly for assembly of the head region. Essential for efficient processing of 16S rRNA. May be needed both before and after RbfA during the maturation of 16S rRNA. It has affinity for free ribosomal 30S subunits but not for 70S ribosomes.</text>
</comment>
<comment type="subunit">
    <text evidence="1">Binds ribosomal protein uS19.</text>
</comment>
<comment type="subcellular location">
    <subcellularLocation>
        <location evidence="1">Cytoplasm</location>
    </subcellularLocation>
</comment>
<comment type="domain">
    <text evidence="1">The PRC barrel domain binds ribosomal protein uS19.</text>
</comment>
<comment type="similarity">
    <text evidence="1">Belongs to the RimM family.</text>
</comment>
<comment type="sequence caution" evidence="2">
    <conflict type="erroneous initiation">
        <sequence resource="EMBL-CDS" id="AAN81579"/>
    </conflict>
</comment>
<dbReference type="EMBL" id="AE014075">
    <property type="protein sequence ID" value="AAN81579.1"/>
    <property type="status" value="ALT_INIT"/>
    <property type="molecule type" value="Genomic_DNA"/>
</dbReference>
<dbReference type="RefSeq" id="WP_000043335.1">
    <property type="nucleotide sequence ID" value="NZ_CP051263.1"/>
</dbReference>
<dbReference type="SMR" id="P0A7X7"/>
<dbReference type="STRING" id="199310.c3129"/>
<dbReference type="GeneID" id="93774458"/>
<dbReference type="KEGG" id="ecc:c3129"/>
<dbReference type="eggNOG" id="COG0806">
    <property type="taxonomic scope" value="Bacteria"/>
</dbReference>
<dbReference type="HOGENOM" id="CLU_077636_1_0_6"/>
<dbReference type="Proteomes" id="UP000001410">
    <property type="component" value="Chromosome"/>
</dbReference>
<dbReference type="GO" id="GO:0005737">
    <property type="term" value="C:cytoplasm"/>
    <property type="evidence" value="ECO:0007669"/>
    <property type="project" value="UniProtKB-SubCell"/>
</dbReference>
<dbReference type="GO" id="GO:0005840">
    <property type="term" value="C:ribosome"/>
    <property type="evidence" value="ECO:0007669"/>
    <property type="project" value="InterPro"/>
</dbReference>
<dbReference type="GO" id="GO:0043022">
    <property type="term" value="F:ribosome binding"/>
    <property type="evidence" value="ECO:0007669"/>
    <property type="project" value="InterPro"/>
</dbReference>
<dbReference type="GO" id="GO:0042274">
    <property type="term" value="P:ribosomal small subunit biogenesis"/>
    <property type="evidence" value="ECO:0007669"/>
    <property type="project" value="UniProtKB-UniRule"/>
</dbReference>
<dbReference type="GO" id="GO:0006364">
    <property type="term" value="P:rRNA processing"/>
    <property type="evidence" value="ECO:0007669"/>
    <property type="project" value="UniProtKB-UniRule"/>
</dbReference>
<dbReference type="FunFam" id="2.30.30.240:FF:000001">
    <property type="entry name" value="Ribosome maturation factor RimM"/>
    <property type="match status" value="1"/>
</dbReference>
<dbReference type="FunFam" id="2.40.30.60:FF:000001">
    <property type="entry name" value="Ribosome maturation factor RimM"/>
    <property type="match status" value="1"/>
</dbReference>
<dbReference type="Gene3D" id="2.30.30.240">
    <property type="entry name" value="PRC-barrel domain"/>
    <property type="match status" value="1"/>
</dbReference>
<dbReference type="Gene3D" id="2.40.30.60">
    <property type="entry name" value="RimM"/>
    <property type="match status" value="1"/>
</dbReference>
<dbReference type="HAMAP" id="MF_00014">
    <property type="entry name" value="Ribosome_mat_RimM"/>
    <property type="match status" value="1"/>
</dbReference>
<dbReference type="InterPro" id="IPR011033">
    <property type="entry name" value="PRC_barrel-like_sf"/>
</dbReference>
<dbReference type="InterPro" id="IPR056792">
    <property type="entry name" value="PRC_RimM"/>
</dbReference>
<dbReference type="InterPro" id="IPR011961">
    <property type="entry name" value="RimM"/>
</dbReference>
<dbReference type="InterPro" id="IPR002676">
    <property type="entry name" value="RimM_N"/>
</dbReference>
<dbReference type="InterPro" id="IPR036976">
    <property type="entry name" value="RimM_N_sf"/>
</dbReference>
<dbReference type="InterPro" id="IPR009000">
    <property type="entry name" value="Transl_B-barrel_sf"/>
</dbReference>
<dbReference type="NCBIfam" id="TIGR02273">
    <property type="entry name" value="16S_RimM"/>
    <property type="match status" value="1"/>
</dbReference>
<dbReference type="PANTHER" id="PTHR33692">
    <property type="entry name" value="RIBOSOME MATURATION FACTOR RIMM"/>
    <property type="match status" value="1"/>
</dbReference>
<dbReference type="PANTHER" id="PTHR33692:SF1">
    <property type="entry name" value="RIBOSOME MATURATION FACTOR RIMM"/>
    <property type="match status" value="1"/>
</dbReference>
<dbReference type="Pfam" id="PF24986">
    <property type="entry name" value="PRC_RimM"/>
    <property type="match status" value="1"/>
</dbReference>
<dbReference type="Pfam" id="PF01782">
    <property type="entry name" value="RimM"/>
    <property type="match status" value="1"/>
</dbReference>
<dbReference type="SUPFAM" id="SSF50346">
    <property type="entry name" value="PRC-barrel domain"/>
    <property type="match status" value="1"/>
</dbReference>
<dbReference type="SUPFAM" id="SSF50447">
    <property type="entry name" value="Translation proteins"/>
    <property type="match status" value="1"/>
</dbReference>
<evidence type="ECO:0000255" key="1">
    <source>
        <dbReference type="HAMAP-Rule" id="MF_00014"/>
    </source>
</evidence>
<evidence type="ECO:0000305" key="2"/>
<sequence>MSKQLTAQAPVDPIVLGKMGSSYGIRGWLRVFSSTEDAESIFDYQPWFIQKAGQWQQVQLESWKHHNQDMIIKLKGVDDRDAANLLTNCEIVVDSSQLPQLEEGDYYWKDLMGCQVVTTEGYDLGKVVDMMETGSNDVLVIKANLKDAFGIKERLVPFLDGQVIKKVDLTTRSIEVDWDPGF</sequence>
<reference key="1">
    <citation type="journal article" date="2002" name="Proc. Natl. Acad. Sci. U.S.A.">
        <title>Extensive mosaic structure revealed by the complete genome sequence of uropathogenic Escherichia coli.</title>
        <authorList>
            <person name="Welch R.A."/>
            <person name="Burland V."/>
            <person name="Plunkett G. III"/>
            <person name="Redford P."/>
            <person name="Roesch P."/>
            <person name="Rasko D."/>
            <person name="Buckles E.L."/>
            <person name="Liou S.-R."/>
            <person name="Boutin A."/>
            <person name="Hackett J."/>
            <person name="Stroud D."/>
            <person name="Mayhew G.F."/>
            <person name="Rose D.J."/>
            <person name="Zhou S."/>
            <person name="Schwartz D.C."/>
            <person name="Perna N.T."/>
            <person name="Mobley H.L.T."/>
            <person name="Donnenberg M.S."/>
            <person name="Blattner F.R."/>
        </authorList>
    </citation>
    <scope>NUCLEOTIDE SEQUENCE [LARGE SCALE GENOMIC DNA]</scope>
    <source>
        <strain>CFT073 / ATCC 700928 / UPEC</strain>
    </source>
</reference>